<accession>Q9MUV6</accession>
<evidence type="ECO:0000255" key="1">
    <source>
        <dbReference type="HAMAP-Rule" id="MF_00808"/>
    </source>
</evidence>
<gene>
    <name evidence="1" type="primary">psbT</name>
</gene>
<proteinExistence type="inferred from homology"/>
<name>PSBT_MESVI</name>
<comment type="function">
    <text evidence="1">Found at the monomer-monomer interface of the photosystem II (PS II) dimer, plays a role in assembly and dimerization of PSII. PSII is a light-driven water plastoquinone oxidoreductase, using light energy to abstract electrons from H(2)O, generating a proton gradient subsequently used for ATP formation.</text>
</comment>
<comment type="subunit">
    <text evidence="1">PSII is composed of 1 copy each of membrane proteins PsbA, PsbB, PsbC, PsbD, PsbE, PsbF, PsbH, PsbI, PsbJ, PsbK, PsbL, PsbM, PsbT, PsbY, PsbZ, Psb30/Ycf12, at least 3 peripheral proteins of the oxygen-evolving complex and a large number of cofactors. It forms dimeric complexes.</text>
</comment>
<comment type="subcellular location">
    <subcellularLocation>
        <location evidence="1">Plastid</location>
        <location evidence="1">Chloroplast thylakoid membrane</location>
        <topology evidence="1">Single-pass membrane protein</topology>
    </subcellularLocation>
</comment>
<comment type="similarity">
    <text evidence="1">Belongs to the PsbT family.</text>
</comment>
<protein>
    <recommendedName>
        <fullName evidence="1">Photosystem II reaction center protein T</fullName>
        <shortName evidence="1">PSII-T</shortName>
    </recommendedName>
</protein>
<dbReference type="EMBL" id="AF166114">
    <property type="protein sequence ID" value="AAF43795.1"/>
    <property type="molecule type" value="Genomic_DNA"/>
</dbReference>
<dbReference type="RefSeq" id="NP_038354.1">
    <property type="nucleotide sequence ID" value="NC_002186.1"/>
</dbReference>
<dbReference type="SMR" id="Q9MUV6"/>
<dbReference type="GeneID" id="800925"/>
<dbReference type="GO" id="GO:0009535">
    <property type="term" value="C:chloroplast thylakoid membrane"/>
    <property type="evidence" value="ECO:0007669"/>
    <property type="project" value="UniProtKB-SubCell"/>
</dbReference>
<dbReference type="GO" id="GO:0009539">
    <property type="term" value="C:photosystem II reaction center"/>
    <property type="evidence" value="ECO:0007669"/>
    <property type="project" value="InterPro"/>
</dbReference>
<dbReference type="GO" id="GO:0015979">
    <property type="term" value="P:photosynthesis"/>
    <property type="evidence" value="ECO:0007669"/>
    <property type="project" value="UniProtKB-UniRule"/>
</dbReference>
<dbReference type="HAMAP" id="MF_00808">
    <property type="entry name" value="PSII_PsbT"/>
    <property type="match status" value="1"/>
</dbReference>
<dbReference type="InterPro" id="IPR001743">
    <property type="entry name" value="PSII_PsbT"/>
</dbReference>
<dbReference type="InterPro" id="IPR037268">
    <property type="entry name" value="PSII_PsbT_sf"/>
</dbReference>
<dbReference type="PANTHER" id="PTHR36411">
    <property type="match status" value="1"/>
</dbReference>
<dbReference type="PANTHER" id="PTHR36411:SF2">
    <property type="entry name" value="PHOTOSYSTEM II REACTION CENTER PROTEIN T"/>
    <property type="match status" value="1"/>
</dbReference>
<dbReference type="Pfam" id="PF01405">
    <property type="entry name" value="PsbT"/>
    <property type="match status" value="1"/>
</dbReference>
<dbReference type="SUPFAM" id="SSF161029">
    <property type="entry name" value="Photosystem II reaction center protein T, PsbT"/>
    <property type="match status" value="1"/>
</dbReference>
<sequence length="31" mass="3616">MEALVYTFLLVGTLGIIFFAIFFREPPRIIK</sequence>
<geneLocation type="chloroplast"/>
<reference key="1">
    <citation type="journal article" date="2000" name="Nature">
        <title>Ancestral chloroplast genome in Mesostigma viride reveals an early branch of green plant evolution.</title>
        <authorList>
            <person name="Lemieux C."/>
            <person name="Otis C."/>
            <person name="Turmel M."/>
        </authorList>
    </citation>
    <scope>NUCLEOTIDE SEQUENCE [LARGE SCALE GENOMIC DNA]</scope>
    <source>
        <strain>NIES-296 / KY-14 / CCMP 2046</strain>
    </source>
</reference>
<keyword id="KW-0150">Chloroplast</keyword>
<keyword id="KW-0472">Membrane</keyword>
<keyword id="KW-0602">Photosynthesis</keyword>
<keyword id="KW-0604">Photosystem II</keyword>
<keyword id="KW-0934">Plastid</keyword>
<keyword id="KW-0793">Thylakoid</keyword>
<keyword id="KW-0812">Transmembrane</keyword>
<keyword id="KW-1133">Transmembrane helix</keyword>
<organism>
    <name type="scientific">Mesostigma viride</name>
    <name type="common">Green alga</name>
    <dbReference type="NCBI Taxonomy" id="41882"/>
    <lineage>
        <taxon>Eukaryota</taxon>
        <taxon>Viridiplantae</taxon>
        <taxon>Streptophyta</taxon>
        <taxon>Mesostigmatophyceae</taxon>
        <taxon>Mesostigmatales</taxon>
        <taxon>Mesostigmataceae</taxon>
        <taxon>Mesostigma</taxon>
    </lineage>
</organism>
<feature type="chain" id="PRO_0000217952" description="Photosystem II reaction center protein T">
    <location>
        <begin position="1"/>
        <end position="31"/>
    </location>
</feature>
<feature type="transmembrane region" description="Helical" evidence="1">
    <location>
        <begin position="3"/>
        <end position="23"/>
    </location>
</feature>